<gene>
    <name evidence="1" type="primary">ligB</name>
    <name type="ordered locus">YPN_3809</name>
    <name type="ORF">YP516_4329</name>
</gene>
<organism>
    <name type="scientific">Yersinia pestis bv. Antiqua (strain Nepal516)</name>
    <dbReference type="NCBI Taxonomy" id="377628"/>
    <lineage>
        <taxon>Bacteria</taxon>
        <taxon>Pseudomonadati</taxon>
        <taxon>Pseudomonadota</taxon>
        <taxon>Gammaproteobacteria</taxon>
        <taxon>Enterobacterales</taxon>
        <taxon>Yersiniaceae</taxon>
        <taxon>Yersinia</taxon>
    </lineage>
</organism>
<sequence>MNILNLKIIMFLLISNTIVVGGAWATSTCPDWPATRIAVEINALEQQLNKWSAAYHQQGHSPVTDDIYDQLQDKLRVWQSCRGLPDKTESQPIPGKGQFLHPVAHTGLKKLKDETALTRWMAGRKNLWVQPKVDGVAVTLVYHGGKLVQLLSRGNGVKGQNWTEKAPFISAIPQYIANAPALLTLQGELFLLMDGHQQAKSGGVNARSTVAGALMRKSPSPLLAQVGVFIWAWPDGPTTMKEKVALLQVMGFPFTAKYSEPVMSHLDVVQWRQFWFQAPLPFVTDGVVVRQEEEPAGRYWQATPGQWSMAWKYPPLQHIAEVKDIHFTLGRTGKGTVVLEVLPIKIDDKWIRRVNIGSVTRWKQWDIAPGDHITLALAGHGIPRLDNVVWRVHQRNTITAPNWDKFHQLSCFQRLPHGCEPQFLSRLIWLSGPGGLDIGGIGGGFWQELIHHELINDLVGWLLLTPEQIASIPGIGNARAEKIYQQFQRAKQQPFSRWLLALGFPQVVSVDAQWQVVLRRSLSEWATMAGIGQMRAKQIKHFLDHPDVQALADFLSTQKVVGFELTE</sequence>
<proteinExistence type="inferred from homology"/>
<reference key="1">
    <citation type="journal article" date="2006" name="J. Bacteriol.">
        <title>Complete genome sequence of Yersinia pestis strains Antiqua and Nepal516: evidence of gene reduction in an emerging pathogen.</title>
        <authorList>
            <person name="Chain P.S.G."/>
            <person name="Hu P."/>
            <person name="Malfatti S.A."/>
            <person name="Radnedge L."/>
            <person name="Larimer F."/>
            <person name="Vergez L.M."/>
            <person name="Worsham P."/>
            <person name="Chu M.C."/>
            <person name="Andersen G.L."/>
        </authorList>
    </citation>
    <scope>NUCLEOTIDE SEQUENCE [LARGE SCALE GENOMIC DNA]</scope>
    <source>
        <strain>Nepal516</strain>
    </source>
</reference>
<reference key="2">
    <citation type="submission" date="2009-04" db="EMBL/GenBank/DDBJ databases">
        <title>Yersinia pestis Nepal516A whole genome shotgun sequencing project.</title>
        <authorList>
            <person name="Plunkett G. III"/>
            <person name="Anderson B.D."/>
            <person name="Baumler D.J."/>
            <person name="Burland V."/>
            <person name="Cabot E.L."/>
            <person name="Glasner J.D."/>
            <person name="Mau B."/>
            <person name="Neeno-Eckwall E."/>
            <person name="Perna N.T."/>
            <person name="Munk A.C."/>
            <person name="Tapia R."/>
            <person name="Green L.D."/>
            <person name="Rogers Y.C."/>
            <person name="Detter J.C."/>
            <person name="Bruce D.C."/>
            <person name="Brettin T.S."/>
        </authorList>
    </citation>
    <scope>NUCLEOTIDE SEQUENCE [LARGE SCALE GENOMIC DNA]</scope>
    <source>
        <strain>Nepal516</strain>
    </source>
</reference>
<name>LIGB_YERPN</name>
<dbReference type="EC" id="6.5.1.2" evidence="1"/>
<dbReference type="EMBL" id="CP000305">
    <property type="protein sequence ID" value="ABG20136.1"/>
    <property type="molecule type" value="Genomic_DNA"/>
</dbReference>
<dbReference type="EMBL" id="ACNQ01000019">
    <property type="protein sequence ID" value="EEO74722.1"/>
    <property type="molecule type" value="Genomic_DNA"/>
</dbReference>
<dbReference type="RefSeq" id="WP_002215674.1">
    <property type="nucleotide sequence ID" value="NZ_ACNQ01000019.1"/>
</dbReference>
<dbReference type="SMR" id="Q1CCZ4"/>
<dbReference type="GeneID" id="57974549"/>
<dbReference type="KEGG" id="ypn:YPN_3809"/>
<dbReference type="HOGENOM" id="CLU_489786_0_0_6"/>
<dbReference type="Proteomes" id="UP000008936">
    <property type="component" value="Chromosome"/>
</dbReference>
<dbReference type="GO" id="GO:0003911">
    <property type="term" value="F:DNA ligase (NAD+) activity"/>
    <property type="evidence" value="ECO:0007669"/>
    <property type="project" value="UniProtKB-UniRule"/>
</dbReference>
<dbReference type="GO" id="GO:0006281">
    <property type="term" value="P:DNA repair"/>
    <property type="evidence" value="ECO:0007669"/>
    <property type="project" value="UniProtKB-KW"/>
</dbReference>
<dbReference type="GO" id="GO:0006260">
    <property type="term" value="P:DNA replication"/>
    <property type="evidence" value="ECO:0007669"/>
    <property type="project" value="UniProtKB-KW"/>
</dbReference>
<dbReference type="CDD" id="cd00114">
    <property type="entry name" value="LIGANc"/>
    <property type="match status" value="1"/>
</dbReference>
<dbReference type="FunFam" id="2.40.50.140:FF:000139">
    <property type="entry name" value="DNA ligase B"/>
    <property type="match status" value="1"/>
</dbReference>
<dbReference type="FunFam" id="3.30.470.30:FF:000007">
    <property type="entry name" value="DNA ligase B"/>
    <property type="match status" value="1"/>
</dbReference>
<dbReference type="Gene3D" id="1.10.150.20">
    <property type="entry name" value="5' to 3' exonuclease, C-terminal subdomain"/>
    <property type="match status" value="1"/>
</dbReference>
<dbReference type="Gene3D" id="3.30.470.30">
    <property type="entry name" value="DNA ligase/mRNA capping enzyme"/>
    <property type="match status" value="1"/>
</dbReference>
<dbReference type="Gene3D" id="1.10.287.610">
    <property type="entry name" value="Helix hairpin bin"/>
    <property type="match status" value="1"/>
</dbReference>
<dbReference type="Gene3D" id="2.40.50.140">
    <property type="entry name" value="Nucleic acid-binding proteins"/>
    <property type="match status" value="1"/>
</dbReference>
<dbReference type="HAMAP" id="MF_01587">
    <property type="entry name" value="DNA_ligase_B"/>
    <property type="match status" value="1"/>
</dbReference>
<dbReference type="InterPro" id="IPR020923">
    <property type="entry name" value="DNA_ligase_B"/>
</dbReference>
<dbReference type="InterPro" id="IPR013839">
    <property type="entry name" value="DNAligase_adenylation"/>
</dbReference>
<dbReference type="InterPro" id="IPR013840">
    <property type="entry name" value="DNAligase_N"/>
</dbReference>
<dbReference type="InterPro" id="IPR012340">
    <property type="entry name" value="NA-bd_OB-fold"/>
</dbReference>
<dbReference type="InterPro" id="IPR050326">
    <property type="entry name" value="NAD_dep_DNA_ligaseB"/>
</dbReference>
<dbReference type="InterPro" id="IPR004150">
    <property type="entry name" value="NAD_DNA_ligase_OB"/>
</dbReference>
<dbReference type="InterPro" id="IPR010994">
    <property type="entry name" value="RuvA_2-like"/>
</dbReference>
<dbReference type="NCBIfam" id="NF005987">
    <property type="entry name" value="PRK08097.1"/>
    <property type="match status" value="1"/>
</dbReference>
<dbReference type="PANTHER" id="PTHR47810">
    <property type="entry name" value="DNA LIGASE"/>
    <property type="match status" value="1"/>
</dbReference>
<dbReference type="PANTHER" id="PTHR47810:SF1">
    <property type="entry name" value="DNA LIGASE B"/>
    <property type="match status" value="1"/>
</dbReference>
<dbReference type="Pfam" id="PF01653">
    <property type="entry name" value="DNA_ligase_aden"/>
    <property type="match status" value="1"/>
</dbReference>
<dbReference type="Pfam" id="PF03120">
    <property type="entry name" value="DNA_ligase_OB"/>
    <property type="match status" value="1"/>
</dbReference>
<dbReference type="SMART" id="SM00532">
    <property type="entry name" value="LIGANc"/>
    <property type="match status" value="1"/>
</dbReference>
<dbReference type="SUPFAM" id="SSF56091">
    <property type="entry name" value="DNA ligase/mRNA capping enzyme, catalytic domain"/>
    <property type="match status" value="1"/>
</dbReference>
<dbReference type="SUPFAM" id="SSF50249">
    <property type="entry name" value="Nucleic acid-binding proteins"/>
    <property type="match status" value="1"/>
</dbReference>
<dbReference type="SUPFAM" id="SSF47781">
    <property type="entry name" value="RuvA domain 2-like"/>
    <property type="match status" value="1"/>
</dbReference>
<feature type="chain" id="PRO_0000313560" description="DNA ligase B">
    <location>
        <begin position="1"/>
        <end position="567"/>
    </location>
</feature>
<feature type="active site" description="N6-AMP-lysine intermediate" evidence="1">
    <location>
        <position position="132"/>
    </location>
</feature>
<keyword id="KW-0227">DNA damage</keyword>
<keyword id="KW-0234">DNA repair</keyword>
<keyword id="KW-0235">DNA replication</keyword>
<keyword id="KW-0436">Ligase</keyword>
<keyword id="KW-0520">NAD</keyword>
<comment type="function">
    <text evidence="1">Catalyzes the formation of phosphodiester linkages between 5'-phosphoryl and 3'-hydroxyl groups in double-stranded DNA using NAD as a coenzyme and as the energy source for the reaction.</text>
</comment>
<comment type="catalytic activity">
    <reaction evidence="1">
        <text>NAD(+) + (deoxyribonucleotide)n-3'-hydroxyl + 5'-phospho-(deoxyribonucleotide)m = (deoxyribonucleotide)n+m + AMP + beta-nicotinamide D-nucleotide.</text>
        <dbReference type="EC" id="6.5.1.2"/>
    </reaction>
</comment>
<comment type="similarity">
    <text evidence="1">Belongs to the NAD-dependent DNA ligase family. LigB subfamily.</text>
</comment>
<evidence type="ECO:0000255" key="1">
    <source>
        <dbReference type="HAMAP-Rule" id="MF_01587"/>
    </source>
</evidence>
<accession>Q1CCZ4</accession>
<accession>D1Q2G9</accession>
<protein>
    <recommendedName>
        <fullName evidence="1">DNA ligase B</fullName>
        <ecNumber evidence="1">6.5.1.2</ecNumber>
    </recommendedName>
    <alternativeName>
        <fullName evidence="1">Polydeoxyribonucleotide synthase [NAD(+)] B</fullName>
    </alternativeName>
</protein>